<comment type="function">
    <text>Core component of nucleosome. Nucleosomes wrap and compact DNA into chromatin, limiting DNA accessibility to the cellular machineries which require DNA as a template. Histones thereby play a central role in transcription regulation, DNA repair, DNA replication and chromosomal stability. DNA accessibility is regulated via a complex set of post-translational modifications of histones, also called histone code, and nucleosome remodeling.</text>
</comment>
<comment type="subunit">
    <text>The nucleosome is a histone octamer containing two molecules each of H2A, H2B, H3 and H4 assembled in one H3-H4 heterotetramer and two H2A-H2B heterodimers. The octamer wraps approximately 147 bp of DNA.</text>
</comment>
<comment type="subcellular location">
    <subcellularLocation>
        <location>Nucleus</location>
    </subcellularLocation>
    <subcellularLocation>
        <location>Chromosome</location>
    </subcellularLocation>
</comment>
<comment type="PTM">
    <text evidence="2">Monoubiquitination at Lys-35 (H2BK34Ub) by the MSL1/MSL2 dimer is required for histone H3 'Lys-4' (H3K4me) and 'Lys-79' (H3K79me) methylation and transcription activation at specific gene loci, such as HOXA9 and MEIS1 loci. Similarly, monoubiquitination at Lys-121 (H2BK120Ub) by the RNF20/40 complex gives a specific tag for epigenetic transcriptional activation and is also prerequisite for histone H3 'Lys-4' and 'Lys-79' methylation. It also functions cooperatively with the FACT dimer to stimulate elongation by RNA polymerase II. H2BK120Ub also acts as a regulator of mRNA splicing: deubiquitination by USP49 is required for efficient cotranscriptional splicing of a large set of exons (By similarity).</text>
</comment>
<comment type="PTM">
    <text evidence="9 10 11 17">Phosphorylated on Ser-15 (H2BS14ph) by STK4/MST1 during apoptosis; which facilitates apoptotic chromatin condensation (PubMed:15197225, PubMed:16039583). Also phosphorylated on Ser-15 in response to DNA double strand breaks (DSBs), and in correlation with somatic hypermutation and immunoglobulin class-switch recombination (PubMed:15197225). Phosphorylation at Ser-37 (H2BS36ph) by AMPK in response to stress promotes transcription (PubMed:20647423, PubMed:32822587).</text>
</comment>
<comment type="PTM">
    <text evidence="3">GlcNAcylation at Ser-113 promotes monoubiquitination of Lys-121. It fluctuates in response to extracellular glucose, and associates with transcribed genes (By similarity).</text>
</comment>
<comment type="PTM">
    <text evidence="2 17">ADP-ribosylated by PARP1 or PARP2 on Ser-7 (H2BS6ADPr) in response to DNA damage (By similarity). H2BS6ADPr promotes recruitment of CHD1L (By similarity). Mono-ADP-ribosylated on Glu-3 (H2BE2ADPr) by PARP3 in response to single-strand breaks (By similarity). Poly ADP-ribosylation on Glu-36 (H2BE35ADPr) by PARP1 regulates adipogenesis: it inhibits phosphorylation at Ser-37 (H2BS36ph), thereby blocking expression of pro-adipogenetic genes (PubMed:32822587).</text>
</comment>
<comment type="PTM">
    <text evidence="12">Crotonylation (Kcr) is specifically present in male germ cells and marks testis-specific genes in post-meiotic cells, including X-linked genes that escape sex chromosome inactivation in haploid cells. Crotonylation marks active promoters and enhancers and confers resistance to transcriptional repressors. It is also associated with post-meiotically activated genes on autosomes.</text>
</comment>
<comment type="PTM">
    <text evidence="15">Hydroxybutyrylation of histones is induced by starvation.</text>
</comment>
<comment type="PTM">
    <text evidence="2">Lactylated in macrophages by EP300/P300 by using lactoyl-CoA directly derived from endogenous or exogenous lactate, leading to stimulates gene transcription.</text>
</comment>
<comment type="similarity">
    <text evidence="18">Belongs to the histone H2B family.</text>
</comment>
<evidence type="ECO:0000250" key="1">
    <source>
        <dbReference type="UniProtKB" id="P23527"/>
    </source>
</evidence>
<evidence type="ECO:0000250" key="2">
    <source>
        <dbReference type="UniProtKB" id="P33778"/>
    </source>
</evidence>
<evidence type="ECO:0000250" key="3">
    <source>
        <dbReference type="UniProtKB" id="P62807"/>
    </source>
</evidence>
<evidence type="ECO:0000250" key="4">
    <source>
        <dbReference type="UniProtKB" id="Q00729"/>
    </source>
</evidence>
<evidence type="ECO:0000250" key="5">
    <source>
        <dbReference type="UniProtKB" id="Q5QNW6"/>
    </source>
</evidence>
<evidence type="ECO:0000250" key="6">
    <source>
        <dbReference type="UniProtKB" id="Q96A08"/>
    </source>
</evidence>
<evidence type="ECO:0000250" key="7">
    <source>
        <dbReference type="UniProtKB" id="Q99879"/>
    </source>
</evidence>
<evidence type="ECO:0000256" key="8">
    <source>
        <dbReference type="SAM" id="MobiDB-lite"/>
    </source>
</evidence>
<evidence type="ECO:0000269" key="9">
    <source>
    </source>
</evidence>
<evidence type="ECO:0000269" key="10">
    <source>
    </source>
</evidence>
<evidence type="ECO:0000269" key="11">
    <source>
    </source>
</evidence>
<evidence type="ECO:0000269" key="12">
    <source>
    </source>
</evidence>
<evidence type="ECO:0000269" key="13">
    <source>
    </source>
</evidence>
<evidence type="ECO:0000269" key="14">
    <source>
    </source>
</evidence>
<evidence type="ECO:0000269" key="15">
    <source>
    </source>
</evidence>
<evidence type="ECO:0000269" key="16">
    <source>
    </source>
</evidence>
<evidence type="ECO:0000269" key="17">
    <source>
    </source>
</evidence>
<evidence type="ECO:0000305" key="18"/>
<evidence type="ECO:0000312" key="19">
    <source>
        <dbReference type="MGI" id="MGI:2448404"/>
    </source>
</evidence>
<evidence type="ECO:0007744" key="20">
    <source>
    </source>
</evidence>
<accession>P10854</accession>
<accession>Q5T008</accession>
<protein>
    <recommendedName>
        <fullName>Histone H2B type 1-M</fullName>
    </recommendedName>
    <alternativeName>
        <fullName>H2B 291B</fullName>
    </alternativeName>
</protein>
<dbReference type="EMBL" id="X05863">
    <property type="protein sequence ID" value="CAA29292.1"/>
    <property type="molecule type" value="Genomic_DNA"/>
</dbReference>
<dbReference type="EMBL" id="AY158928">
    <property type="protein sequence ID" value="AAO06238.1"/>
    <property type="molecule type" value="Genomic_DNA"/>
</dbReference>
<dbReference type="EMBL" id="AL589651">
    <property type="status" value="NOT_ANNOTATED_CDS"/>
    <property type="molecule type" value="Genomic_DNA"/>
</dbReference>
<dbReference type="CCDS" id="CCDS26290.1"/>
<dbReference type="PIR" id="S04153">
    <property type="entry name" value="S04153"/>
</dbReference>
<dbReference type="RefSeq" id="NP_835507.1">
    <property type="nucleotide sequence ID" value="NM_178200.2"/>
</dbReference>
<dbReference type="SMR" id="P10854"/>
<dbReference type="BioGRID" id="235105">
    <property type="interactions" value="9"/>
</dbReference>
<dbReference type="FunCoup" id="P10854">
    <property type="interactions" value="2363"/>
</dbReference>
<dbReference type="IntAct" id="P10854">
    <property type="interactions" value="3"/>
</dbReference>
<dbReference type="STRING" id="10090.ENSMUSP00000153457"/>
<dbReference type="GlyCosmos" id="P10854">
    <property type="glycosylation" value="1 site, No reported glycans"/>
</dbReference>
<dbReference type="GlyGen" id="P10854">
    <property type="glycosylation" value="2 sites, 1 O-linked glycan (1 site)"/>
</dbReference>
<dbReference type="iPTMnet" id="P10854"/>
<dbReference type="PhosphoSitePlus" id="P10854"/>
<dbReference type="SwissPalm" id="P10854"/>
<dbReference type="jPOST" id="P10854"/>
<dbReference type="PaxDb" id="10090-ENSMUSP00000106102"/>
<dbReference type="ProteomicsDB" id="269668"/>
<dbReference type="Antibodypedia" id="53616">
    <property type="antibodies" value="142 antibodies from 18 providers"/>
</dbReference>
<dbReference type="DNASU" id="319186"/>
<dbReference type="Ensembl" id="ENSMUST00000224651.2">
    <property type="protein sequence ID" value="ENSMUSP00000153457.2"/>
    <property type="gene ID" value="ENSMUSG00000114279.2"/>
</dbReference>
<dbReference type="GeneID" id="319186"/>
<dbReference type="KEGG" id="mmu:319186"/>
<dbReference type="UCSC" id="uc007prd.2">
    <property type="organism name" value="mouse"/>
</dbReference>
<dbReference type="AGR" id="MGI:2448404"/>
<dbReference type="CTD" id="8342"/>
<dbReference type="MGI" id="MGI:2448404">
    <property type="gene designation" value="H2bc14"/>
</dbReference>
<dbReference type="VEuPathDB" id="HostDB:ENSMUSG00000114279"/>
<dbReference type="eggNOG" id="KOG1744">
    <property type="taxonomic scope" value="Eukaryota"/>
</dbReference>
<dbReference type="GeneTree" id="ENSGT01110000267152"/>
<dbReference type="HOGENOM" id="CLU_075666_2_1_1"/>
<dbReference type="InParanoid" id="P10854"/>
<dbReference type="OMA" id="LLXGELA"/>
<dbReference type="OrthoDB" id="9620091at2759"/>
<dbReference type="PhylomeDB" id="P10854"/>
<dbReference type="TreeFam" id="TF300212"/>
<dbReference type="Reactome" id="R-MMU-110330">
    <property type="pathway name" value="Recognition and association of DNA glycosylase with site containing an affected purine"/>
</dbReference>
<dbReference type="Reactome" id="R-MMU-110331">
    <property type="pathway name" value="Cleavage of the damaged purine"/>
</dbReference>
<dbReference type="Reactome" id="R-MMU-212300">
    <property type="pathway name" value="PRC2 methylates histones and DNA"/>
</dbReference>
<dbReference type="Reactome" id="R-MMU-2299718">
    <property type="pathway name" value="Condensation of Prophase Chromosomes"/>
</dbReference>
<dbReference type="Reactome" id="R-MMU-2559586">
    <property type="pathway name" value="DNA Damage/Telomere Stress Induced Senescence"/>
</dbReference>
<dbReference type="Reactome" id="R-MMU-3214815">
    <property type="pathway name" value="HDACs deacetylate histones"/>
</dbReference>
<dbReference type="Reactome" id="R-MMU-3214847">
    <property type="pathway name" value="HATs acetylate histones"/>
</dbReference>
<dbReference type="Reactome" id="R-MMU-5693565">
    <property type="pathway name" value="Recruitment and ATM-mediated phosphorylation of repair and signaling proteins at DNA double strand breaks"/>
</dbReference>
<dbReference type="Reactome" id="R-MMU-5693571">
    <property type="pathway name" value="Nonhomologous End-Joining (NHEJ)"/>
</dbReference>
<dbReference type="Reactome" id="R-MMU-5693607">
    <property type="pathway name" value="Processing of DNA double-strand break ends"/>
</dbReference>
<dbReference type="Reactome" id="R-MMU-606279">
    <property type="pathway name" value="Deposition of new CENPA-containing nucleosomes at the centromere"/>
</dbReference>
<dbReference type="Reactome" id="R-MMU-69473">
    <property type="pathway name" value="G2/M DNA damage checkpoint"/>
</dbReference>
<dbReference type="Reactome" id="R-MMU-8866654">
    <property type="pathway name" value="E3 ubiquitin ligases ubiquitinate target proteins"/>
</dbReference>
<dbReference type="Reactome" id="R-MMU-8936459">
    <property type="pathway name" value="RUNX1 regulates genes involved in megakaryocyte differentiation and platelet function"/>
</dbReference>
<dbReference type="Reactome" id="R-MMU-9018519">
    <property type="pathway name" value="Estrogen-dependent gene expression"/>
</dbReference>
<dbReference type="Reactome" id="R-MMU-9670095">
    <property type="pathway name" value="Inhibition of DNA recombination at telomere"/>
</dbReference>
<dbReference type="Reactome" id="R-MMU-9841922">
    <property type="pathway name" value="MLL4 and MLL3 complexes regulate expression of PPARG target genes in adipogenesis and hepatic steatosis"/>
</dbReference>
<dbReference type="Reactome" id="R-MMU-9843940">
    <property type="pathway name" value="Regulation of endogenous retroelements by KRAB-ZFP proteins"/>
</dbReference>
<dbReference type="BioGRID-ORCS" id="319186">
    <property type="hits" value="13 hits in 49 CRISPR screens"/>
</dbReference>
<dbReference type="PRO" id="PR:P10854"/>
<dbReference type="Proteomes" id="UP000000589">
    <property type="component" value="Chromosome 13"/>
</dbReference>
<dbReference type="RNAct" id="P10854">
    <property type="molecule type" value="protein"/>
</dbReference>
<dbReference type="Bgee" id="ENSMUSG00000114279">
    <property type="expression patterns" value="Expressed in spermatid and 52 other cell types or tissues"/>
</dbReference>
<dbReference type="ExpressionAtlas" id="P10854">
    <property type="expression patterns" value="baseline and differential"/>
</dbReference>
<dbReference type="GO" id="GO:0005654">
    <property type="term" value="C:nucleoplasm"/>
    <property type="evidence" value="ECO:0000304"/>
    <property type="project" value="Reactome"/>
</dbReference>
<dbReference type="GO" id="GO:0000786">
    <property type="term" value="C:nucleosome"/>
    <property type="evidence" value="ECO:0007669"/>
    <property type="project" value="UniProtKB-KW"/>
</dbReference>
<dbReference type="GO" id="GO:0003677">
    <property type="term" value="F:DNA binding"/>
    <property type="evidence" value="ECO:0007669"/>
    <property type="project" value="UniProtKB-KW"/>
</dbReference>
<dbReference type="GO" id="GO:0046982">
    <property type="term" value="F:protein heterodimerization activity"/>
    <property type="evidence" value="ECO:0007669"/>
    <property type="project" value="InterPro"/>
</dbReference>
<dbReference type="GO" id="GO:0030527">
    <property type="term" value="F:structural constituent of chromatin"/>
    <property type="evidence" value="ECO:0007669"/>
    <property type="project" value="InterPro"/>
</dbReference>
<dbReference type="CDD" id="cd22910">
    <property type="entry name" value="HFD_H2B"/>
    <property type="match status" value="1"/>
</dbReference>
<dbReference type="FunFam" id="1.10.20.10:FF:000003">
    <property type="entry name" value="Histone H2B"/>
    <property type="match status" value="1"/>
</dbReference>
<dbReference type="Gene3D" id="1.10.20.10">
    <property type="entry name" value="Histone, subunit A"/>
    <property type="match status" value="1"/>
</dbReference>
<dbReference type="InterPro" id="IPR009072">
    <property type="entry name" value="Histone-fold"/>
</dbReference>
<dbReference type="InterPro" id="IPR007125">
    <property type="entry name" value="Histone_H2A/H2B/H3"/>
</dbReference>
<dbReference type="InterPro" id="IPR000558">
    <property type="entry name" value="Histone_H2B"/>
</dbReference>
<dbReference type="InterPro" id="IPR055333">
    <property type="entry name" value="HISTONE_H2B_site"/>
</dbReference>
<dbReference type="PANTHER" id="PTHR23428">
    <property type="entry name" value="HISTONE H2B"/>
    <property type="match status" value="1"/>
</dbReference>
<dbReference type="Pfam" id="PF00125">
    <property type="entry name" value="Histone"/>
    <property type="match status" value="1"/>
</dbReference>
<dbReference type="PRINTS" id="PR00621">
    <property type="entry name" value="HISTONEH2B"/>
</dbReference>
<dbReference type="SMART" id="SM00427">
    <property type="entry name" value="H2B"/>
    <property type="match status" value="1"/>
</dbReference>
<dbReference type="SUPFAM" id="SSF47113">
    <property type="entry name" value="Histone-fold"/>
    <property type="match status" value="1"/>
</dbReference>
<dbReference type="PROSITE" id="PS00357">
    <property type="entry name" value="HISTONE_H2B"/>
    <property type="match status" value="1"/>
</dbReference>
<feature type="initiator methionine" description="Removed" evidence="1">
    <location>
        <position position="1"/>
    </location>
</feature>
<feature type="chain" id="PRO_0000071840" description="Histone H2B type 1-M">
    <location>
        <begin position="2"/>
        <end position="126"/>
    </location>
</feature>
<feature type="region of interest" description="Disordered" evidence="8">
    <location>
        <begin position="1"/>
        <end position="36"/>
    </location>
</feature>
<feature type="compositionally biased region" description="Low complexity" evidence="8">
    <location>
        <begin position="1"/>
        <end position="12"/>
    </location>
</feature>
<feature type="modified residue" description="N-acetylproline" evidence="1">
    <location>
        <position position="2"/>
    </location>
</feature>
<feature type="modified residue" description="ADP-ribosyl glutamic acid" evidence="2">
    <location>
        <position position="3"/>
    </location>
</feature>
<feature type="modified residue" description="N6-(2-hydroxyisobutyryl)lysine; alternate" evidence="14">
    <location>
        <position position="6"/>
    </location>
</feature>
<feature type="modified residue" description="N6-(beta-hydroxybutyryl)lysine; alternate" evidence="15">
    <location>
        <position position="6"/>
    </location>
</feature>
<feature type="modified residue" description="N6-acetyllysine; alternate" evidence="20">
    <location>
        <position position="6"/>
    </location>
</feature>
<feature type="modified residue" description="N6-butyryllysine; alternate" evidence="2">
    <location>
        <position position="6"/>
    </location>
</feature>
<feature type="modified residue" description="N6-crotonyllysine; alternate" evidence="12">
    <location>
        <position position="6"/>
    </location>
</feature>
<feature type="modified residue" description="N6-lactoyllysine; alternate" evidence="16">
    <location>
        <position position="6"/>
    </location>
</feature>
<feature type="modified residue" description="ADP-ribosylserine" evidence="7">
    <location>
        <position position="7"/>
    </location>
</feature>
<feature type="modified residue" description="N6-(beta-hydroxybutyryl)lysine; alternate" evidence="15">
    <location>
        <position position="12"/>
    </location>
</feature>
<feature type="modified residue" description="N6-acetyllysine; alternate" evidence="20">
    <location>
        <position position="12"/>
    </location>
</feature>
<feature type="modified residue" description="N6-crotonyllysine; alternate" evidence="12">
    <location>
        <position position="12"/>
    </location>
</feature>
<feature type="modified residue" description="N6-lactoyllysine; alternate" evidence="16">
    <location>
        <position position="12"/>
    </location>
</feature>
<feature type="modified residue" description="N6-(2-hydroxyisobutyryl)lysine; alternate" evidence="14">
    <location>
        <position position="13"/>
    </location>
</feature>
<feature type="modified residue" description="N6-acetyllysine; alternate" evidence="7">
    <location>
        <position position="13"/>
    </location>
</feature>
<feature type="modified residue" description="N6-crotonyllysine; alternate" evidence="12">
    <location>
        <position position="13"/>
    </location>
</feature>
<feature type="modified residue" description="Phosphoserine; by STK4/MST1" evidence="9 10">
    <location>
        <position position="15"/>
    </location>
</feature>
<feature type="modified residue" description="N6-acetyllysine; alternate" evidence="7">
    <location>
        <position position="16"/>
    </location>
</feature>
<feature type="modified residue" description="N6-crotonyllysine; alternate" evidence="12">
    <location>
        <position position="16"/>
    </location>
</feature>
<feature type="modified residue" description="N6-lactoyllysine; alternate" evidence="16">
    <location>
        <position position="16"/>
    </location>
</feature>
<feature type="modified residue" description="N6-acetyllysine; alternate" evidence="7">
    <location>
        <position position="17"/>
    </location>
</feature>
<feature type="modified residue" description="N6-crotonyllysine; alternate" evidence="12">
    <location>
        <position position="17"/>
    </location>
</feature>
<feature type="modified residue" description="N6-glutaryllysine; alternate" evidence="2">
    <location>
        <position position="17"/>
    </location>
</feature>
<feature type="modified residue" description="N6-lactoyllysine; alternate" evidence="16">
    <location>
        <position position="17"/>
    </location>
</feature>
<feature type="modified residue" description="N6-(2-hydroxyisobutyryl)lysine; alternate" evidence="14">
    <location>
        <position position="21"/>
    </location>
</feature>
<feature type="modified residue" description="N6-(beta-hydroxybutyryl)lysine; alternate" evidence="15">
    <location>
        <position position="21"/>
    </location>
</feature>
<feature type="modified residue" description="N6-acetyllysine; alternate" evidence="7">
    <location>
        <position position="21"/>
    </location>
</feature>
<feature type="modified residue" description="N6-butyryllysine; alternate" evidence="2">
    <location>
        <position position="21"/>
    </location>
</feature>
<feature type="modified residue" description="N6-crotonyllysine; alternate" evidence="12">
    <location>
        <position position="21"/>
    </location>
</feature>
<feature type="modified residue" description="N6-lactoyllysine; alternate" evidence="16">
    <location>
        <position position="21"/>
    </location>
</feature>
<feature type="modified residue" description="N6-(2-hydroxyisobutyryl)lysine; alternate" evidence="14">
    <location>
        <position position="24"/>
    </location>
</feature>
<feature type="modified residue" description="N6-acetyllysine; alternate" evidence="7">
    <location>
        <position position="24"/>
    </location>
</feature>
<feature type="modified residue" description="N6-crotonyllysine; alternate" evidence="12">
    <location>
        <position position="24"/>
    </location>
</feature>
<feature type="modified residue" description="N6-lactoyllysine; alternate" evidence="2">
    <location>
        <position position="24"/>
    </location>
</feature>
<feature type="modified residue" description="N6-(2-hydroxyisobutyryl)lysine" evidence="14">
    <location>
        <position position="25"/>
    </location>
</feature>
<feature type="modified residue" description="N6-(2-hydroxyisobutyryl)lysine; alternate" evidence="14">
    <location>
        <position position="35"/>
    </location>
</feature>
<feature type="modified residue" description="N6-(beta-hydroxybutyryl)lysine; alternate" evidence="15">
    <location>
        <position position="35"/>
    </location>
</feature>
<feature type="modified residue" description="N6-crotonyllysine; alternate" evidence="12">
    <location>
        <position position="35"/>
    </location>
</feature>
<feature type="modified residue" description="N6-glutaryllysine; alternate" evidence="2">
    <location>
        <position position="35"/>
    </location>
</feature>
<feature type="modified residue" description="N6-succinyllysine; alternate" evidence="7">
    <location>
        <position position="35"/>
    </location>
</feature>
<feature type="modified residue" description="PolyADP-ribosyl glutamic acid" evidence="17">
    <location>
        <position position="36"/>
    </location>
</feature>
<feature type="modified residue" description="Phosphoserine; by AMPK" evidence="11 17">
    <location>
        <position position="37"/>
    </location>
</feature>
<feature type="modified residue" description="N6-(2-hydroxyisobutyryl)lysine; alternate" evidence="14">
    <location>
        <position position="44"/>
    </location>
</feature>
<feature type="modified residue" description="N6-glutaryllysine; alternate" evidence="2">
    <location>
        <position position="44"/>
    </location>
</feature>
<feature type="modified residue" description="N6-lactoyllysine; alternate" evidence="2">
    <location>
        <position position="44"/>
    </location>
</feature>
<feature type="modified residue" description="N6-(2-hydroxyisobutyryl)lysine; alternate" evidence="14">
    <location>
        <position position="47"/>
    </location>
</feature>
<feature type="modified residue" description="N6-glutaryllysine; alternate" evidence="2">
    <location>
        <position position="47"/>
    </location>
</feature>
<feature type="modified residue" description="N6-methyllysine; alternate" evidence="3">
    <location>
        <position position="47"/>
    </location>
</feature>
<feature type="modified residue" description="N6,N6-dimethyllysine; alternate" evidence="3">
    <location>
        <position position="58"/>
    </location>
</feature>
<feature type="modified residue" description="N6-(2-hydroxyisobutyryl)lysine; alternate" evidence="14">
    <location>
        <position position="58"/>
    </location>
</feature>
<feature type="modified residue" description="Dimethylated arginine" evidence="6">
    <location>
        <position position="80"/>
    </location>
</feature>
<feature type="modified residue" description="N6,N6,N6-trimethyllysine; alternate" evidence="6">
    <location>
        <position position="86"/>
    </location>
</feature>
<feature type="modified residue" description="N6-(2-hydroxyisobutyryl)lysine; alternate" evidence="14">
    <location>
        <position position="86"/>
    </location>
</feature>
<feature type="modified residue" description="N6-acetyllysine; alternate" evidence="6">
    <location>
        <position position="86"/>
    </location>
</feature>
<feature type="modified residue" description="N6-lactoyllysine; alternate" evidence="16">
    <location>
        <position position="86"/>
    </location>
</feature>
<feature type="modified residue" description="Omega-N-methylarginine" evidence="6">
    <location>
        <position position="87"/>
    </location>
</feature>
<feature type="modified residue" description="Omega-N-methylarginine" evidence="6">
    <location>
        <position position="93"/>
    </location>
</feature>
<feature type="modified residue" description="N6-(2-hydroxyisobutyryl)lysine; alternate" evidence="14">
    <location>
        <position position="109"/>
    </location>
</feature>
<feature type="modified residue" description="N6-(beta-hydroxybutyryl)lysine; alternate" evidence="15">
    <location>
        <position position="109"/>
    </location>
</feature>
<feature type="modified residue" description="N6-glutaryllysine; alternate" evidence="2">
    <location>
        <position position="109"/>
    </location>
</feature>
<feature type="modified residue" description="N6-lactoyllysine; alternate" evidence="16">
    <location>
        <position position="109"/>
    </location>
</feature>
<feature type="modified residue" description="N6-methyllysine; alternate" evidence="3">
    <location>
        <position position="109"/>
    </location>
</feature>
<feature type="modified residue" description="Phosphothreonine" evidence="4">
    <location>
        <position position="116"/>
    </location>
</feature>
<feature type="modified residue" description="N6-(2-hydroxyisobutyryl)lysine; alternate" evidence="14">
    <location>
        <position position="117"/>
    </location>
</feature>
<feature type="modified residue" description="N6-(beta-hydroxybutyryl)lysine; alternate" evidence="15">
    <location>
        <position position="117"/>
    </location>
</feature>
<feature type="modified residue" description="N6-glutaryllysine; alternate" evidence="2">
    <location>
        <position position="117"/>
    </location>
</feature>
<feature type="modified residue" description="N6-lactoyllysine; alternate" evidence="16">
    <location>
        <position position="117"/>
    </location>
</feature>
<feature type="modified residue" description="N6-methylated lysine; alternate" evidence="4">
    <location>
        <position position="117"/>
    </location>
</feature>
<feature type="modified residue" description="N6-succinyllysine; alternate" evidence="7">
    <location>
        <position position="117"/>
    </location>
</feature>
<feature type="modified residue" description="N6-(2-hydroxyisobutyryl)lysine; alternate" evidence="14">
    <location>
        <position position="121"/>
    </location>
</feature>
<feature type="modified residue" description="N6-glutaryllysine; alternate" evidence="2">
    <location>
        <position position="121"/>
    </location>
</feature>
<feature type="modified residue" description="N6-lactoyllysine; alternate" evidence="2">
    <location>
        <position position="121"/>
    </location>
</feature>
<feature type="modified residue" description="N6-succinyllysine; alternate" evidence="13">
    <location>
        <position position="121"/>
    </location>
</feature>
<feature type="glycosylation site" description="O-linked (GlcNAc) serine" evidence="3">
    <location>
        <position position="113"/>
    </location>
</feature>
<feature type="cross-link" description="Glycyl lysine isopeptide (Lys-Gly) (interchain with G-Cter in SUMO2); alternate" evidence="7">
    <location>
        <position position="6"/>
    </location>
</feature>
<feature type="cross-link" description="Glycyl lysine isopeptide (Lys-Gly) (interchain with G-Cter in SUMO2); alternate" evidence="5">
    <location>
        <position position="21"/>
    </location>
</feature>
<feature type="cross-link" description="Glycyl lysine isopeptide (Lys-Gly) (interchain with G-Cter in ubiquitin); alternate" evidence="7">
    <location>
        <position position="35"/>
    </location>
</feature>
<feature type="cross-link" description="Glycyl lysine isopeptide (Lys-Gly) (interchain with G-Cter in ubiquitin); alternate" evidence="7">
    <location>
        <position position="121"/>
    </location>
</feature>
<name>H2B1M_MOUSE</name>
<proteinExistence type="evidence at protein level"/>
<gene>
    <name evidence="19" type="primary">H2bc14</name>
    <name evidence="19" type="synonym">Hist1h2bm</name>
</gene>
<organism>
    <name type="scientific">Mus musculus</name>
    <name type="common">Mouse</name>
    <dbReference type="NCBI Taxonomy" id="10090"/>
    <lineage>
        <taxon>Eukaryota</taxon>
        <taxon>Metazoa</taxon>
        <taxon>Chordata</taxon>
        <taxon>Craniata</taxon>
        <taxon>Vertebrata</taxon>
        <taxon>Euteleostomi</taxon>
        <taxon>Mammalia</taxon>
        <taxon>Eutheria</taxon>
        <taxon>Euarchontoglires</taxon>
        <taxon>Glires</taxon>
        <taxon>Rodentia</taxon>
        <taxon>Myomorpha</taxon>
        <taxon>Muroidea</taxon>
        <taxon>Muridae</taxon>
        <taxon>Murinae</taxon>
        <taxon>Mus</taxon>
        <taxon>Mus</taxon>
    </lineage>
</organism>
<reference key="1">
    <citation type="journal article" date="1987" name="Nucleic Acids Res.">
        <title>Mouse histone H2A and H2B genes: four functional genes and a pseudogene undergoing gene conversion with a closely linked functional gene.</title>
        <authorList>
            <person name="Liu T.-J."/>
            <person name="Liu L."/>
            <person name="Marzluff W.F."/>
        </authorList>
    </citation>
    <scope>NUCLEOTIDE SEQUENCE [GENOMIC DNA]</scope>
</reference>
<reference key="2">
    <citation type="journal article" date="2002" name="Genomics">
        <title>The human and mouse replication-dependent histone genes.</title>
        <authorList>
            <person name="Marzluff W.F."/>
            <person name="Gongidi P."/>
            <person name="Woods K.R."/>
            <person name="Jin J."/>
            <person name="Maltais L.J."/>
        </authorList>
    </citation>
    <scope>NUCLEOTIDE SEQUENCE [GENOMIC DNA]</scope>
</reference>
<reference key="3">
    <citation type="journal article" date="2009" name="PLoS Biol.">
        <title>Lineage-specific biology revealed by a finished genome assembly of the mouse.</title>
        <authorList>
            <person name="Church D.M."/>
            <person name="Goodstadt L."/>
            <person name="Hillier L.W."/>
            <person name="Zody M.C."/>
            <person name="Goldstein S."/>
            <person name="She X."/>
            <person name="Bult C.J."/>
            <person name="Agarwala R."/>
            <person name="Cherry J.L."/>
            <person name="DiCuccio M."/>
            <person name="Hlavina W."/>
            <person name="Kapustin Y."/>
            <person name="Meric P."/>
            <person name="Maglott D."/>
            <person name="Birtle Z."/>
            <person name="Marques A.C."/>
            <person name="Graves T."/>
            <person name="Zhou S."/>
            <person name="Teague B."/>
            <person name="Potamousis K."/>
            <person name="Churas C."/>
            <person name="Place M."/>
            <person name="Herschleb J."/>
            <person name="Runnheim R."/>
            <person name="Forrest D."/>
            <person name="Amos-Landgraf J."/>
            <person name="Schwartz D.C."/>
            <person name="Cheng Z."/>
            <person name="Lindblad-Toh K."/>
            <person name="Eichler E.E."/>
            <person name="Ponting C.P."/>
        </authorList>
    </citation>
    <scope>NUCLEOTIDE SEQUENCE [LARGE SCALE GENOMIC DNA]</scope>
    <source>
        <strain>C57BL/6J</strain>
    </source>
</reference>
<reference key="4">
    <citation type="journal article" date="2004" name="J. Exp. Med.">
        <title>Phosphorylation of histone H2B at DNA double-strand breaks.</title>
        <authorList>
            <person name="Fernandez-Capetillo O."/>
            <person name="Allis C.D."/>
            <person name="Nussenzweig A."/>
        </authorList>
    </citation>
    <scope>PHOSPHORYLATION AT SER-15</scope>
</reference>
<reference key="5">
    <citation type="journal article" date="2005" name="Immunity">
        <title>Histone modifications associated with somatic hypermutation.</title>
        <authorList>
            <person name="Odegard V.H."/>
            <person name="Kim S.T."/>
            <person name="Anderson S.M."/>
            <person name="Shlomchik M.J."/>
            <person name="Schatz D.G."/>
        </authorList>
    </citation>
    <scope>PHOSPHORYLATION AT SER-15</scope>
</reference>
<reference key="6">
    <citation type="journal article" date="2010" name="Science">
        <title>Signaling kinase AMPK activates stress-promoted transcription via histone H2B phosphorylation.</title>
        <authorList>
            <person name="Bungard D."/>
            <person name="Fuerth B.J."/>
            <person name="Zeng P.Y."/>
            <person name="Faubert B."/>
            <person name="Maas N.L."/>
            <person name="Viollet B."/>
            <person name="Carling D."/>
            <person name="Thompson C.B."/>
            <person name="Jones R.G."/>
            <person name="Berger S.L."/>
        </authorList>
    </citation>
    <scope>PHOSPHORYLATION AT SER-37</scope>
</reference>
<reference key="7">
    <citation type="journal article" date="2011" name="Cell">
        <title>Identification of 67 histone marks and histone lysine crotonylation as a new type of histone modification.</title>
        <authorList>
            <person name="Tan M."/>
            <person name="Luo H."/>
            <person name="Lee S."/>
            <person name="Jin F."/>
            <person name="Yang J.S."/>
            <person name="Montellier E."/>
            <person name="Buchou T."/>
            <person name="Cheng Z."/>
            <person name="Rousseaux S."/>
            <person name="Rajagopal N."/>
            <person name="Lu Z."/>
            <person name="Ye Z."/>
            <person name="Zhu Q."/>
            <person name="Wysocka J."/>
            <person name="Ye Y."/>
            <person name="Khochbin S."/>
            <person name="Ren B."/>
            <person name="Zhao Y."/>
        </authorList>
    </citation>
    <scope>CROTONYLATION AT LYS-6; LYS-12; LYS-13; LYS-16; LYS-17; LYS-21; LYS-24 AND LYS-35</scope>
</reference>
<reference key="8">
    <citation type="journal article" date="2012" name="Mol. Cell. Proteomics">
        <title>Lysine succinylation and lysine malonylation in histones.</title>
        <authorList>
            <person name="Xie Z."/>
            <person name="Dai J."/>
            <person name="Dai L."/>
            <person name="Tan M."/>
            <person name="Cheng Z."/>
            <person name="Wu Y."/>
            <person name="Boeke J.D."/>
            <person name="Zhao Y."/>
        </authorList>
    </citation>
    <scope>SUCCINYLATION AT LYS-121</scope>
</reference>
<reference key="9">
    <citation type="journal article" date="2013" name="Mol. Cell">
        <title>SIRT5-mediated lysine desuccinylation impacts diverse metabolic pathways.</title>
        <authorList>
            <person name="Park J."/>
            <person name="Chen Y."/>
            <person name="Tishkoff D.X."/>
            <person name="Peng C."/>
            <person name="Tan M."/>
            <person name="Dai L."/>
            <person name="Xie Z."/>
            <person name="Zhang Y."/>
            <person name="Zwaans B.M."/>
            <person name="Skinner M.E."/>
            <person name="Lombard D.B."/>
            <person name="Zhao Y."/>
        </authorList>
    </citation>
    <scope>ACETYLATION [LARGE SCALE ANALYSIS] AT LYS-6 AND LYS-12</scope>
    <scope>IDENTIFICATION BY MASS SPECTROMETRY [LARGE SCALE ANALYSIS]</scope>
    <source>
        <tissue>Embryonic fibroblast</tissue>
    </source>
</reference>
<reference key="10">
    <citation type="journal article" date="2014" name="Nat. Chem. Biol.">
        <title>Lysine 2-hydroxyisobutyrylation is a widely distributed active histone mark.</title>
        <authorList>
            <person name="Dai L."/>
            <person name="Peng C."/>
            <person name="Montellier E."/>
            <person name="Lu Z."/>
            <person name="Chen Y."/>
            <person name="Ishii H."/>
            <person name="Debernardi A."/>
            <person name="Buchou T."/>
            <person name="Rousseaux S."/>
            <person name="Jin F."/>
            <person name="Sabari B.R."/>
            <person name="Deng Z."/>
            <person name="Allis C.D."/>
            <person name="Ren B."/>
            <person name="Khochbin S."/>
            <person name="Zhao Y."/>
        </authorList>
    </citation>
    <scope>HYDROXYBUTYRYLATION AT LYS-6; LYS-13; LYS-21; LYS-24; LYS-25; LYS-35; LYS-44; LYS-47; LYS-58; LYS-86; LYS-109; LYS-117 AND LYS-121</scope>
</reference>
<reference key="11">
    <citation type="journal article" date="2016" name="Mol. Cell">
        <title>Metabolic regulation of gene expression by histone lysine beta-hydroxybutyrylation.</title>
        <authorList>
            <person name="Xie Z."/>
            <person name="Zhang D."/>
            <person name="Chung D."/>
            <person name="Tang Z."/>
            <person name="Huang H."/>
            <person name="Dai L."/>
            <person name="Qi S."/>
            <person name="Li J."/>
            <person name="Colak G."/>
            <person name="Chen Y."/>
            <person name="Xia C."/>
            <person name="Peng C."/>
            <person name="Ruan H."/>
            <person name="Kirkey M."/>
            <person name="Wang D."/>
            <person name="Jensen L.M."/>
            <person name="Kwon O.K."/>
            <person name="Lee S."/>
            <person name="Pletcher S.D."/>
            <person name="Tan M."/>
            <person name="Lombard D.B."/>
            <person name="White K.P."/>
            <person name="Zhao H."/>
            <person name="Li J."/>
            <person name="Roeder R.G."/>
            <person name="Yang X."/>
            <person name="Zhao Y."/>
        </authorList>
    </citation>
    <scope>HYDROXYBUTYRYLATION AT LYS-6; LYS-12; LYS-21; LYS-35; LYS-109 AND LYS-117</scope>
</reference>
<reference key="12">
    <citation type="journal article" date="2019" name="Nature">
        <title>Metabolic regulation of gene expression by histone lactylation.</title>
        <authorList>
            <person name="Zhang D."/>
            <person name="Tang Z."/>
            <person name="Huang H."/>
            <person name="Zhou G."/>
            <person name="Cui C."/>
            <person name="Weng Y."/>
            <person name="Liu W."/>
            <person name="Kim S."/>
            <person name="Lee S."/>
            <person name="Perez-Neut M."/>
            <person name="Ding J."/>
            <person name="Czyz D."/>
            <person name="Hu R."/>
            <person name="Ye Z."/>
            <person name="He M."/>
            <person name="Zheng Y.G."/>
            <person name="Shuman H.A."/>
            <person name="Dai L."/>
            <person name="Ren B."/>
            <person name="Roeder R.G."/>
            <person name="Becker L."/>
            <person name="Zhao Y."/>
        </authorList>
    </citation>
    <scope>LACTYLATION AT LYS-6; LYS-12; LYS-16; LYS-17; LYS-21; LYS-86; LYS-109 AND LYS-117</scope>
</reference>
<reference key="13">
    <citation type="journal article" date="2020" name="Mol. Cell">
        <title>Functional interplay between histone H2B ADP-ribosylation and phosphorylation controls adipogenesis.</title>
        <authorList>
            <person name="Huang D."/>
            <person name="Camacho C.V."/>
            <person name="Setlem R."/>
            <person name="Ryu K.W."/>
            <person name="Parameswaran B."/>
            <person name="Gupta R.K."/>
            <person name="Kraus W.L."/>
        </authorList>
    </citation>
    <scope>ADP-RIBOSYLATION AT GLU-36</scope>
    <scope>PHOSPHORYLATION AT SER-37</scope>
</reference>
<sequence length="126" mass="13936">MPEPTKSAPAPKKGSKKAVTKAQKKDGKKRKRSRKESYSVYVYKVLKQVHPDTGISSKAMGIMNSFVNDIFERIAGEASRLAHYNKRSTITSREIQTAVRLLLPGELAKHAVSEGTKAVTKYTSSK</sequence>
<keyword id="KW-0007">Acetylation</keyword>
<keyword id="KW-0013">ADP-ribosylation</keyword>
<keyword id="KW-0158">Chromosome</keyword>
<keyword id="KW-0238">DNA-binding</keyword>
<keyword id="KW-0325">Glycoprotein</keyword>
<keyword id="KW-0379">Hydroxylation</keyword>
<keyword id="KW-1017">Isopeptide bond</keyword>
<keyword id="KW-0488">Methylation</keyword>
<keyword id="KW-0544">Nucleosome core</keyword>
<keyword id="KW-0539">Nucleus</keyword>
<keyword id="KW-0597">Phosphoprotein</keyword>
<keyword id="KW-1185">Reference proteome</keyword>
<keyword id="KW-0832">Ubl conjugation</keyword>